<name>KHSE_SYNPW</name>
<sequence length="315" mass="33295">MAQPRIGQTVVVDVPATTANIGPGFDCLGAALDLNNRFTMRRIEGDGERFELIIEGQEGSHLRGGAENLVYRAAQRVWKAAGEEPVALEARVRLAVPPARGLGSSATAIVAGLVGANALVGEPLSKEKLLELAIDIEGHPDNVVPSLLGGLCMTAKAASQRWRVVRCEWMHSVKAVVAIPAIRLSTSEARRAMPKTVPVGDAVVNLGALTLLLQGLRTGNGDLIADGMHDRLHEPYRWRLIKGGQEVRQAALEAGAWGCAISGAGPSILALCSEDKGPGISQAMVRAWESVGVASRAPLLNLQTTGSHWQPWDAG</sequence>
<gene>
    <name evidence="1" type="primary">thrB</name>
    <name type="ordered locus">SynWH7803_0773</name>
</gene>
<keyword id="KW-0028">Amino-acid biosynthesis</keyword>
<keyword id="KW-0067">ATP-binding</keyword>
<keyword id="KW-0963">Cytoplasm</keyword>
<keyword id="KW-0418">Kinase</keyword>
<keyword id="KW-0547">Nucleotide-binding</keyword>
<keyword id="KW-1185">Reference proteome</keyword>
<keyword id="KW-0791">Threonine biosynthesis</keyword>
<keyword id="KW-0808">Transferase</keyword>
<evidence type="ECO:0000255" key="1">
    <source>
        <dbReference type="HAMAP-Rule" id="MF_00384"/>
    </source>
</evidence>
<proteinExistence type="inferred from homology"/>
<dbReference type="EC" id="2.7.1.39" evidence="1"/>
<dbReference type="EMBL" id="CT971583">
    <property type="protein sequence ID" value="CAK23199.1"/>
    <property type="molecule type" value="Genomic_DNA"/>
</dbReference>
<dbReference type="SMR" id="A5GJT4"/>
<dbReference type="STRING" id="32051.SynWH7803_0773"/>
<dbReference type="KEGG" id="syx:SynWH7803_0773"/>
<dbReference type="eggNOG" id="COG0083">
    <property type="taxonomic scope" value="Bacteria"/>
</dbReference>
<dbReference type="HOGENOM" id="CLU_041243_0_2_3"/>
<dbReference type="OrthoDB" id="9769912at2"/>
<dbReference type="UniPathway" id="UPA00050">
    <property type="reaction ID" value="UER00064"/>
</dbReference>
<dbReference type="Proteomes" id="UP000001566">
    <property type="component" value="Chromosome"/>
</dbReference>
<dbReference type="GO" id="GO:0005737">
    <property type="term" value="C:cytoplasm"/>
    <property type="evidence" value="ECO:0007669"/>
    <property type="project" value="UniProtKB-SubCell"/>
</dbReference>
<dbReference type="GO" id="GO:0005524">
    <property type="term" value="F:ATP binding"/>
    <property type="evidence" value="ECO:0007669"/>
    <property type="project" value="UniProtKB-UniRule"/>
</dbReference>
<dbReference type="GO" id="GO:0004413">
    <property type="term" value="F:homoserine kinase activity"/>
    <property type="evidence" value="ECO:0007669"/>
    <property type="project" value="UniProtKB-UniRule"/>
</dbReference>
<dbReference type="GO" id="GO:0009088">
    <property type="term" value="P:threonine biosynthetic process"/>
    <property type="evidence" value="ECO:0007669"/>
    <property type="project" value="UniProtKB-UniRule"/>
</dbReference>
<dbReference type="Gene3D" id="3.30.230.10">
    <property type="match status" value="1"/>
</dbReference>
<dbReference type="Gene3D" id="3.30.70.890">
    <property type="entry name" value="GHMP kinase, C-terminal domain"/>
    <property type="match status" value="1"/>
</dbReference>
<dbReference type="HAMAP" id="MF_00384">
    <property type="entry name" value="Homoser_kinase"/>
    <property type="match status" value="1"/>
</dbReference>
<dbReference type="InterPro" id="IPR013750">
    <property type="entry name" value="GHMP_kinase_C_dom"/>
</dbReference>
<dbReference type="InterPro" id="IPR036554">
    <property type="entry name" value="GHMP_kinase_C_sf"/>
</dbReference>
<dbReference type="InterPro" id="IPR006204">
    <property type="entry name" value="GHMP_kinase_N_dom"/>
</dbReference>
<dbReference type="InterPro" id="IPR006203">
    <property type="entry name" value="GHMP_knse_ATP-bd_CS"/>
</dbReference>
<dbReference type="InterPro" id="IPR000870">
    <property type="entry name" value="Homoserine_kinase"/>
</dbReference>
<dbReference type="InterPro" id="IPR020568">
    <property type="entry name" value="Ribosomal_Su5_D2-typ_SF"/>
</dbReference>
<dbReference type="InterPro" id="IPR014721">
    <property type="entry name" value="Ribsml_uS5_D2-typ_fold_subgr"/>
</dbReference>
<dbReference type="NCBIfam" id="NF002288">
    <property type="entry name" value="PRK01212.1-4"/>
    <property type="match status" value="1"/>
</dbReference>
<dbReference type="NCBIfam" id="TIGR00191">
    <property type="entry name" value="thrB"/>
    <property type="match status" value="1"/>
</dbReference>
<dbReference type="PANTHER" id="PTHR20861:SF1">
    <property type="entry name" value="HOMOSERINE KINASE"/>
    <property type="match status" value="1"/>
</dbReference>
<dbReference type="PANTHER" id="PTHR20861">
    <property type="entry name" value="HOMOSERINE/4-DIPHOSPHOCYTIDYL-2-C-METHYL-D-ERYTHRITOL KINASE"/>
    <property type="match status" value="1"/>
</dbReference>
<dbReference type="Pfam" id="PF08544">
    <property type="entry name" value="GHMP_kinases_C"/>
    <property type="match status" value="1"/>
</dbReference>
<dbReference type="Pfam" id="PF00288">
    <property type="entry name" value="GHMP_kinases_N"/>
    <property type="match status" value="1"/>
</dbReference>
<dbReference type="PIRSF" id="PIRSF000676">
    <property type="entry name" value="Homoser_kin"/>
    <property type="match status" value="1"/>
</dbReference>
<dbReference type="PRINTS" id="PR00958">
    <property type="entry name" value="HOMSERKINASE"/>
</dbReference>
<dbReference type="SUPFAM" id="SSF55060">
    <property type="entry name" value="GHMP Kinase, C-terminal domain"/>
    <property type="match status" value="1"/>
</dbReference>
<dbReference type="SUPFAM" id="SSF54211">
    <property type="entry name" value="Ribosomal protein S5 domain 2-like"/>
    <property type="match status" value="1"/>
</dbReference>
<dbReference type="PROSITE" id="PS00627">
    <property type="entry name" value="GHMP_KINASES_ATP"/>
    <property type="match status" value="1"/>
</dbReference>
<organism>
    <name type="scientific">Synechococcus sp. (strain WH7803)</name>
    <dbReference type="NCBI Taxonomy" id="32051"/>
    <lineage>
        <taxon>Bacteria</taxon>
        <taxon>Bacillati</taxon>
        <taxon>Cyanobacteriota</taxon>
        <taxon>Cyanophyceae</taxon>
        <taxon>Synechococcales</taxon>
        <taxon>Synechococcaceae</taxon>
        <taxon>Synechococcus</taxon>
    </lineage>
</organism>
<accession>A5GJT4</accession>
<feature type="chain" id="PRO_1000049184" description="Homoserine kinase">
    <location>
        <begin position="1"/>
        <end position="315"/>
    </location>
</feature>
<feature type="binding site" evidence="1">
    <location>
        <begin position="97"/>
        <end position="107"/>
    </location>
    <ligand>
        <name>ATP</name>
        <dbReference type="ChEBI" id="CHEBI:30616"/>
    </ligand>
</feature>
<comment type="function">
    <text evidence="1">Catalyzes the ATP-dependent phosphorylation of L-homoserine to L-homoserine phosphate.</text>
</comment>
<comment type="catalytic activity">
    <reaction evidence="1">
        <text>L-homoserine + ATP = O-phospho-L-homoserine + ADP + H(+)</text>
        <dbReference type="Rhea" id="RHEA:13985"/>
        <dbReference type="ChEBI" id="CHEBI:15378"/>
        <dbReference type="ChEBI" id="CHEBI:30616"/>
        <dbReference type="ChEBI" id="CHEBI:57476"/>
        <dbReference type="ChEBI" id="CHEBI:57590"/>
        <dbReference type="ChEBI" id="CHEBI:456216"/>
        <dbReference type="EC" id="2.7.1.39"/>
    </reaction>
</comment>
<comment type="pathway">
    <text evidence="1">Amino-acid biosynthesis; L-threonine biosynthesis; L-threonine from L-aspartate: step 4/5.</text>
</comment>
<comment type="subcellular location">
    <subcellularLocation>
        <location evidence="1">Cytoplasm</location>
    </subcellularLocation>
</comment>
<comment type="similarity">
    <text evidence="1">Belongs to the GHMP kinase family. Homoserine kinase subfamily.</text>
</comment>
<reference key="1">
    <citation type="submission" date="2006-05" db="EMBL/GenBank/DDBJ databases">
        <authorList>
            <consortium name="Genoscope"/>
        </authorList>
    </citation>
    <scope>NUCLEOTIDE SEQUENCE [LARGE SCALE GENOMIC DNA]</scope>
    <source>
        <strain>WH7803</strain>
    </source>
</reference>
<protein>
    <recommendedName>
        <fullName evidence="1">Homoserine kinase</fullName>
        <shortName evidence="1">HK</shortName>
        <shortName evidence="1">HSK</shortName>
        <ecNumber evidence="1">2.7.1.39</ecNumber>
    </recommendedName>
</protein>